<feature type="chain" id="PRO_0000374967" description="Ribosomal protein uS12 methylthiotransferase RimO">
    <location>
        <begin position="1"/>
        <end position="455"/>
    </location>
</feature>
<feature type="domain" description="MTTase N-terminal" evidence="1">
    <location>
        <begin position="30"/>
        <end position="140"/>
    </location>
</feature>
<feature type="domain" description="Radical SAM core" evidence="2">
    <location>
        <begin position="157"/>
        <end position="386"/>
    </location>
</feature>
<feature type="domain" description="TRAM" evidence="1">
    <location>
        <begin position="389"/>
        <end position="455"/>
    </location>
</feature>
<feature type="binding site" evidence="1">
    <location>
        <position position="39"/>
    </location>
    <ligand>
        <name>[4Fe-4S] cluster</name>
        <dbReference type="ChEBI" id="CHEBI:49883"/>
        <label>1</label>
    </ligand>
</feature>
<feature type="binding site" evidence="1">
    <location>
        <position position="75"/>
    </location>
    <ligand>
        <name>[4Fe-4S] cluster</name>
        <dbReference type="ChEBI" id="CHEBI:49883"/>
        <label>1</label>
    </ligand>
</feature>
<feature type="binding site" evidence="1">
    <location>
        <position position="104"/>
    </location>
    <ligand>
        <name>[4Fe-4S] cluster</name>
        <dbReference type="ChEBI" id="CHEBI:49883"/>
        <label>1</label>
    </ligand>
</feature>
<feature type="binding site" evidence="1">
    <location>
        <position position="171"/>
    </location>
    <ligand>
        <name>[4Fe-4S] cluster</name>
        <dbReference type="ChEBI" id="CHEBI:49883"/>
        <label>2</label>
        <note>4Fe-4S-S-AdoMet</note>
    </ligand>
</feature>
<feature type="binding site" evidence="1">
    <location>
        <position position="175"/>
    </location>
    <ligand>
        <name>[4Fe-4S] cluster</name>
        <dbReference type="ChEBI" id="CHEBI:49883"/>
        <label>2</label>
        <note>4Fe-4S-S-AdoMet</note>
    </ligand>
</feature>
<feature type="binding site" evidence="1">
    <location>
        <position position="178"/>
    </location>
    <ligand>
        <name>[4Fe-4S] cluster</name>
        <dbReference type="ChEBI" id="CHEBI:49883"/>
        <label>2</label>
        <note>4Fe-4S-S-AdoMet</note>
    </ligand>
</feature>
<dbReference type="EC" id="2.8.4.4" evidence="1"/>
<dbReference type="EMBL" id="CP000577">
    <property type="protein sequence ID" value="ABN76126.1"/>
    <property type="molecule type" value="Genomic_DNA"/>
</dbReference>
<dbReference type="RefSeq" id="WP_011840746.1">
    <property type="nucleotide sequence ID" value="NC_009049.1"/>
</dbReference>
<dbReference type="SMR" id="A3PIG0"/>
<dbReference type="KEGG" id="rsh:Rsph17029_1015"/>
<dbReference type="HOGENOM" id="CLU_018697_0_0_5"/>
<dbReference type="GO" id="GO:0005829">
    <property type="term" value="C:cytosol"/>
    <property type="evidence" value="ECO:0007669"/>
    <property type="project" value="TreeGrafter"/>
</dbReference>
<dbReference type="GO" id="GO:0051539">
    <property type="term" value="F:4 iron, 4 sulfur cluster binding"/>
    <property type="evidence" value="ECO:0007669"/>
    <property type="project" value="UniProtKB-UniRule"/>
</dbReference>
<dbReference type="GO" id="GO:0035599">
    <property type="term" value="F:aspartic acid methylthiotransferase activity"/>
    <property type="evidence" value="ECO:0007669"/>
    <property type="project" value="TreeGrafter"/>
</dbReference>
<dbReference type="GO" id="GO:0046872">
    <property type="term" value="F:metal ion binding"/>
    <property type="evidence" value="ECO:0007669"/>
    <property type="project" value="UniProtKB-KW"/>
</dbReference>
<dbReference type="GO" id="GO:0103039">
    <property type="term" value="F:protein methylthiotransferase activity"/>
    <property type="evidence" value="ECO:0007669"/>
    <property type="project" value="UniProtKB-EC"/>
</dbReference>
<dbReference type="GO" id="GO:0006400">
    <property type="term" value="P:tRNA modification"/>
    <property type="evidence" value="ECO:0007669"/>
    <property type="project" value="InterPro"/>
</dbReference>
<dbReference type="CDD" id="cd01335">
    <property type="entry name" value="Radical_SAM"/>
    <property type="match status" value="1"/>
</dbReference>
<dbReference type="FunFam" id="3.40.50.12160:FF:000002">
    <property type="entry name" value="Ribosomal protein S12 methylthiotransferase RimO"/>
    <property type="match status" value="1"/>
</dbReference>
<dbReference type="FunFam" id="3.80.30.20:FF:000001">
    <property type="entry name" value="tRNA-2-methylthio-N(6)-dimethylallyladenosine synthase 2"/>
    <property type="match status" value="1"/>
</dbReference>
<dbReference type="Gene3D" id="3.40.50.12160">
    <property type="entry name" value="Methylthiotransferase, N-terminal domain"/>
    <property type="match status" value="1"/>
</dbReference>
<dbReference type="Gene3D" id="2.40.50.140">
    <property type="entry name" value="Nucleic acid-binding proteins"/>
    <property type="match status" value="1"/>
</dbReference>
<dbReference type="Gene3D" id="3.80.30.20">
    <property type="entry name" value="tm_1862 like domain"/>
    <property type="match status" value="1"/>
</dbReference>
<dbReference type="HAMAP" id="MF_01865">
    <property type="entry name" value="MTTase_RimO"/>
    <property type="match status" value="1"/>
</dbReference>
<dbReference type="InterPro" id="IPR006638">
    <property type="entry name" value="Elp3/MiaA/NifB-like_rSAM"/>
</dbReference>
<dbReference type="InterPro" id="IPR005839">
    <property type="entry name" value="Methylthiotransferase"/>
</dbReference>
<dbReference type="InterPro" id="IPR013848">
    <property type="entry name" value="Methylthiotransferase_N"/>
</dbReference>
<dbReference type="InterPro" id="IPR038135">
    <property type="entry name" value="Methylthiotransferase_N_sf"/>
</dbReference>
<dbReference type="InterPro" id="IPR012340">
    <property type="entry name" value="NA-bd_OB-fold"/>
</dbReference>
<dbReference type="InterPro" id="IPR005840">
    <property type="entry name" value="Ribosomal_uS12_MeSTrfase_RimO"/>
</dbReference>
<dbReference type="InterPro" id="IPR007197">
    <property type="entry name" value="rSAM"/>
</dbReference>
<dbReference type="InterPro" id="IPR023404">
    <property type="entry name" value="rSAM_horseshoe"/>
</dbReference>
<dbReference type="InterPro" id="IPR002792">
    <property type="entry name" value="TRAM_dom"/>
</dbReference>
<dbReference type="NCBIfam" id="TIGR01125">
    <property type="entry name" value="30S ribosomal protein S12 methylthiotransferase RimO"/>
    <property type="match status" value="1"/>
</dbReference>
<dbReference type="NCBIfam" id="TIGR00089">
    <property type="entry name" value="MiaB/RimO family radical SAM methylthiotransferase"/>
    <property type="match status" value="1"/>
</dbReference>
<dbReference type="PANTHER" id="PTHR43837">
    <property type="entry name" value="RIBOSOMAL PROTEIN S12 METHYLTHIOTRANSFERASE RIMO"/>
    <property type="match status" value="1"/>
</dbReference>
<dbReference type="PANTHER" id="PTHR43837:SF1">
    <property type="entry name" value="RIBOSOMAL PROTEIN US12 METHYLTHIOTRANSFERASE RIMO"/>
    <property type="match status" value="1"/>
</dbReference>
<dbReference type="Pfam" id="PF04055">
    <property type="entry name" value="Radical_SAM"/>
    <property type="match status" value="1"/>
</dbReference>
<dbReference type="Pfam" id="PF18693">
    <property type="entry name" value="TRAM_2"/>
    <property type="match status" value="1"/>
</dbReference>
<dbReference type="Pfam" id="PF00919">
    <property type="entry name" value="UPF0004"/>
    <property type="match status" value="1"/>
</dbReference>
<dbReference type="SFLD" id="SFLDG01082">
    <property type="entry name" value="B12-binding_domain_containing"/>
    <property type="match status" value="1"/>
</dbReference>
<dbReference type="SFLD" id="SFLDG01061">
    <property type="entry name" value="methylthiotransferase"/>
    <property type="match status" value="1"/>
</dbReference>
<dbReference type="SFLD" id="SFLDF00274">
    <property type="entry name" value="ribosomal_protein_S12_methylth"/>
    <property type="match status" value="1"/>
</dbReference>
<dbReference type="SMART" id="SM00729">
    <property type="entry name" value="Elp3"/>
    <property type="match status" value="1"/>
</dbReference>
<dbReference type="SUPFAM" id="SSF102114">
    <property type="entry name" value="Radical SAM enzymes"/>
    <property type="match status" value="1"/>
</dbReference>
<dbReference type="PROSITE" id="PS51449">
    <property type="entry name" value="MTTASE_N"/>
    <property type="match status" value="1"/>
</dbReference>
<dbReference type="PROSITE" id="PS51918">
    <property type="entry name" value="RADICAL_SAM"/>
    <property type="match status" value="1"/>
</dbReference>
<dbReference type="PROSITE" id="PS50926">
    <property type="entry name" value="TRAM"/>
    <property type="match status" value="1"/>
</dbReference>
<comment type="function">
    <text evidence="1">Catalyzes the methylthiolation of an aspartic acid residue of ribosomal protein uS12.</text>
</comment>
<comment type="catalytic activity">
    <reaction evidence="1">
        <text>L-aspartate(89)-[ribosomal protein uS12]-hydrogen + (sulfur carrier)-SH + AH2 + 2 S-adenosyl-L-methionine = 3-methylsulfanyl-L-aspartate(89)-[ribosomal protein uS12]-hydrogen + (sulfur carrier)-H + 5'-deoxyadenosine + L-methionine + A + S-adenosyl-L-homocysteine + 2 H(+)</text>
        <dbReference type="Rhea" id="RHEA:37087"/>
        <dbReference type="Rhea" id="RHEA-COMP:10460"/>
        <dbReference type="Rhea" id="RHEA-COMP:10461"/>
        <dbReference type="Rhea" id="RHEA-COMP:14737"/>
        <dbReference type="Rhea" id="RHEA-COMP:14739"/>
        <dbReference type="ChEBI" id="CHEBI:13193"/>
        <dbReference type="ChEBI" id="CHEBI:15378"/>
        <dbReference type="ChEBI" id="CHEBI:17319"/>
        <dbReference type="ChEBI" id="CHEBI:17499"/>
        <dbReference type="ChEBI" id="CHEBI:29917"/>
        <dbReference type="ChEBI" id="CHEBI:29961"/>
        <dbReference type="ChEBI" id="CHEBI:57844"/>
        <dbReference type="ChEBI" id="CHEBI:57856"/>
        <dbReference type="ChEBI" id="CHEBI:59789"/>
        <dbReference type="ChEBI" id="CHEBI:64428"/>
        <dbReference type="ChEBI" id="CHEBI:73599"/>
        <dbReference type="EC" id="2.8.4.4"/>
    </reaction>
</comment>
<comment type="cofactor">
    <cofactor evidence="1">
        <name>[4Fe-4S] cluster</name>
        <dbReference type="ChEBI" id="CHEBI:49883"/>
    </cofactor>
    <text evidence="1">Binds 2 [4Fe-4S] clusters. One cluster is coordinated with 3 cysteines and an exchangeable S-adenosyl-L-methionine.</text>
</comment>
<comment type="subcellular location">
    <subcellularLocation>
        <location evidence="1">Cytoplasm</location>
    </subcellularLocation>
</comment>
<comment type="similarity">
    <text evidence="1">Belongs to the methylthiotransferase family. RimO subfamily.</text>
</comment>
<accession>A3PIG0</accession>
<gene>
    <name evidence="1" type="primary">rimO</name>
    <name type="ordered locus">Rsph17029_1015</name>
</gene>
<keyword id="KW-0004">4Fe-4S</keyword>
<keyword id="KW-0963">Cytoplasm</keyword>
<keyword id="KW-0408">Iron</keyword>
<keyword id="KW-0411">Iron-sulfur</keyword>
<keyword id="KW-0479">Metal-binding</keyword>
<keyword id="KW-0949">S-adenosyl-L-methionine</keyword>
<keyword id="KW-0808">Transferase</keyword>
<evidence type="ECO:0000255" key="1">
    <source>
        <dbReference type="HAMAP-Rule" id="MF_01865"/>
    </source>
</evidence>
<evidence type="ECO:0000255" key="2">
    <source>
        <dbReference type="PROSITE-ProRule" id="PRU01266"/>
    </source>
</evidence>
<sequence length="455" mass="50075">MGAMAQNPPNLRPDLAPRLVIDSPRREGQPTIGMVSLGCPKALVDSERILTRLRAEGYAISPDYAGADAVIVNTCGFLDSAKAESLEAIGEALRENGRVIVTGCLGAEPDYVTGAHPKVLAVTGPHQYEQVLDAVHGAVPPAPDPFVDLLPATGVRLTPRHFSYLKISEGCNHTCRFCIIPDMRGRLASRPERAVLREAEKLVEAGVRELLVISQDTSAYGTDWKGPEKFPILPLARELGRLGAWVRLHYVYPYPHVRELIPLMAEGLVLPYLDIPFQHAHPEVLKRMARPAAAARTLDEIAAWRRDCPEITLRSTFIVGYPGETEAEFQTLLDWLDEAQLDRVGCFQYENVAGARSNALPDHVAPEVKQERWDRFMEKAQAISEAKLAAKVGRRIEVIVDEVDEDGATCRTKADAPEIDGNLFIDEGFKGLAPGDILTVEVEEAGEYDLWGRPV</sequence>
<reference key="1">
    <citation type="submission" date="2007-02" db="EMBL/GenBank/DDBJ databases">
        <title>Complete sequence of chromosome 1 of Rhodobacter sphaeroides ATCC 17029.</title>
        <authorList>
            <person name="Copeland A."/>
            <person name="Lucas S."/>
            <person name="Lapidus A."/>
            <person name="Barry K."/>
            <person name="Detter J.C."/>
            <person name="Glavina del Rio T."/>
            <person name="Hammon N."/>
            <person name="Israni S."/>
            <person name="Dalin E."/>
            <person name="Tice H."/>
            <person name="Pitluck S."/>
            <person name="Kiss H."/>
            <person name="Brettin T."/>
            <person name="Bruce D."/>
            <person name="Han C."/>
            <person name="Tapia R."/>
            <person name="Gilna P."/>
            <person name="Schmutz J."/>
            <person name="Larimer F."/>
            <person name="Land M."/>
            <person name="Hauser L."/>
            <person name="Kyrpides N."/>
            <person name="Mikhailova N."/>
            <person name="Richardson P."/>
            <person name="Mackenzie C."/>
            <person name="Choudhary M."/>
            <person name="Donohue T.J."/>
            <person name="Kaplan S."/>
        </authorList>
    </citation>
    <scope>NUCLEOTIDE SEQUENCE [LARGE SCALE GENOMIC DNA]</scope>
    <source>
        <strain>ATCC 17029 / ATH 2.4.9</strain>
    </source>
</reference>
<name>RIMO_CERS1</name>
<proteinExistence type="inferred from homology"/>
<organism>
    <name type="scientific">Cereibacter sphaeroides (strain ATCC 17029 / ATH 2.4.9)</name>
    <name type="common">Rhodobacter sphaeroides</name>
    <dbReference type="NCBI Taxonomy" id="349101"/>
    <lineage>
        <taxon>Bacteria</taxon>
        <taxon>Pseudomonadati</taxon>
        <taxon>Pseudomonadota</taxon>
        <taxon>Alphaproteobacteria</taxon>
        <taxon>Rhodobacterales</taxon>
        <taxon>Paracoccaceae</taxon>
        <taxon>Cereibacter</taxon>
    </lineage>
</organism>
<protein>
    <recommendedName>
        <fullName evidence="1">Ribosomal protein uS12 methylthiotransferase RimO</fullName>
        <shortName evidence="1">uS12 MTTase</shortName>
        <shortName evidence="1">uS12 methylthiotransferase</shortName>
        <ecNumber evidence="1">2.8.4.4</ecNumber>
    </recommendedName>
    <alternativeName>
        <fullName evidence="1">Ribosomal protein uS12 (aspartate-C(3))-methylthiotransferase</fullName>
    </alternativeName>
    <alternativeName>
        <fullName evidence="1">Ribosome maturation factor RimO</fullName>
    </alternativeName>
</protein>